<comment type="function">
    <text evidence="4">Part of the ABC transporter complex YxdLM which could be involved in peptide resistance. Responsible for energy coupling to the transport system (Probable).</text>
</comment>
<comment type="subunit">
    <text evidence="4">The complex is composed of two ATP-binding proteins (YxdL) and two transmembrane proteins (YxdM).</text>
</comment>
<comment type="induction">
    <text evidence="2 3">Transcriptionally regulated by YxdJ. Induced by the antibacterial protein LL-37, probably via YxdJ.</text>
</comment>
<comment type="similarity">
    <text evidence="4">Belongs to the ABC transporter superfamily.</text>
</comment>
<accession>P42423</accession>
<sequence>MANMLEVKHINKTYKGQVSYQALKQISFSIEEGEFTAVMGPSGSGKTTLLNIISTIDRPDSGDILINGENPHRLKRTKLAHFRRKQLGFVFQDFNLLDTLTIGENIMLPLTLEKEAPSVMEEKLHGIAAKLGIENLLNKRTFEVSGGQRQRAAIARAVIHKPSLILADEPTGNLDSKATKDVMETLQSLNRDDHVTALMVTHDPVSASYCRRVIFIKDGELFNEIYRGENRQVFYEQILDVLSMLGGNANDLSSVRL</sequence>
<proteinExistence type="evidence at transcript level"/>
<reference key="1">
    <citation type="journal article" date="1994" name="Microbiology">
        <title>Cloning and nucleotide sequencing of a 15 kb region of the Bacillus subtilis genome containing the iol operon.</title>
        <authorList>
            <person name="Yoshida K."/>
            <person name="Sano H."/>
            <person name="Miwa Y."/>
            <person name="Ogasawara N."/>
            <person name="Fujita Y."/>
        </authorList>
    </citation>
    <scope>NUCLEOTIDE SEQUENCE [GENOMIC DNA]</scope>
    <source>
        <strain>168 / BGSC1A1</strain>
    </source>
</reference>
<reference key="2">
    <citation type="journal article" date="1995" name="DNA Res.">
        <title>Cloning and sequencing of a 23-kb region of the Bacillus subtilis genome between the iol and hut operons.</title>
        <authorList>
            <person name="Yoshida K."/>
            <person name="Fujimyra M."/>
            <person name="Yanai N."/>
            <person name="Fujita Y."/>
        </authorList>
    </citation>
    <scope>NUCLEOTIDE SEQUENCE [GENOMIC DNA]</scope>
    <source>
        <strain>168 / BGSC1A1</strain>
    </source>
</reference>
<reference key="3">
    <citation type="journal article" date="1997" name="Nature">
        <title>The complete genome sequence of the Gram-positive bacterium Bacillus subtilis.</title>
        <authorList>
            <person name="Kunst F."/>
            <person name="Ogasawara N."/>
            <person name="Moszer I."/>
            <person name="Albertini A.M."/>
            <person name="Alloni G."/>
            <person name="Azevedo V."/>
            <person name="Bertero M.G."/>
            <person name="Bessieres P."/>
            <person name="Bolotin A."/>
            <person name="Borchert S."/>
            <person name="Borriss R."/>
            <person name="Boursier L."/>
            <person name="Brans A."/>
            <person name="Braun M."/>
            <person name="Brignell S.C."/>
            <person name="Bron S."/>
            <person name="Brouillet S."/>
            <person name="Bruschi C.V."/>
            <person name="Caldwell B."/>
            <person name="Capuano V."/>
            <person name="Carter N.M."/>
            <person name="Choi S.-K."/>
            <person name="Codani J.-J."/>
            <person name="Connerton I.F."/>
            <person name="Cummings N.J."/>
            <person name="Daniel R.A."/>
            <person name="Denizot F."/>
            <person name="Devine K.M."/>
            <person name="Duesterhoeft A."/>
            <person name="Ehrlich S.D."/>
            <person name="Emmerson P.T."/>
            <person name="Entian K.-D."/>
            <person name="Errington J."/>
            <person name="Fabret C."/>
            <person name="Ferrari E."/>
            <person name="Foulger D."/>
            <person name="Fritz C."/>
            <person name="Fujita M."/>
            <person name="Fujita Y."/>
            <person name="Fuma S."/>
            <person name="Galizzi A."/>
            <person name="Galleron N."/>
            <person name="Ghim S.-Y."/>
            <person name="Glaser P."/>
            <person name="Goffeau A."/>
            <person name="Golightly E.J."/>
            <person name="Grandi G."/>
            <person name="Guiseppi G."/>
            <person name="Guy B.J."/>
            <person name="Haga K."/>
            <person name="Haiech J."/>
            <person name="Harwood C.R."/>
            <person name="Henaut A."/>
            <person name="Hilbert H."/>
            <person name="Holsappel S."/>
            <person name="Hosono S."/>
            <person name="Hullo M.-F."/>
            <person name="Itaya M."/>
            <person name="Jones L.-M."/>
            <person name="Joris B."/>
            <person name="Karamata D."/>
            <person name="Kasahara Y."/>
            <person name="Klaerr-Blanchard M."/>
            <person name="Klein C."/>
            <person name="Kobayashi Y."/>
            <person name="Koetter P."/>
            <person name="Koningstein G."/>
            <person name="Krogh S."/>
            <person name="Kumano M."/>
            <person name="Kurita K."/>
            <person name="Lapidus A."/>
            <person name="Lardinois S."/>
            <person name="Lauber J."/>
            <person name="Lazarevic V."/>
            <person name="Lee S.-M."/>
            <person name="Levine A."/>
            <person name="Liu H."/>
            <person name="Masuda S."/>
            <person name="Mauel C."/>
            <person name="Medigue C."/>
            <person name="Medina N."/>
            <person name="Mellado R.P."/>
            <person name="Mizuno M."/>
            <person name="Moestl D."/>
            <person name="Nakai S."/>
            <person name="Noback M."/>
            <person name="Noone D."/>
            <person name="O'Reilly M."/>
            <person name="Ogawa K."/>
            <person name="Ogiwara A."/>
            <person name="Oudega B."/>
            <person name="Park S.-H."/>
            <person name="Parro V."/>
            <person name="Pohl T.M."/>
            <person name="Portetelle D."/>
            <person name="Porwollik S."/>
            <person name="Prescott A.M."/>
            <person name="Presecan E."/>
            <person name="Pujic P."/>
            <person name="Purnelle B."/>
            <person name="Rapoport G."/>
            <person name="Rey M."/>
            <person name="Reynolds S."/>
            <person name="Rieger M."/>
            <person name="Rivolta C."/>
            <person name="Rocha E."/>
            <person name="Roche B."/>
            <person name="Rose M."/>
            <person name="Sadaie Y."/>
            <person name="Sato T."/>
            <person name="Scanlan E."/>
            <person name="Schleich S."/>
            <person name="Schroeter R."/>
            <person name="Scoffone F."/>
            <person name="Sekiguchi J."/>
            <person name="Sekowska A."/>
            <person name="Seror S.J."/>
            <person name="Serror P."/>
            <person name="Shin B.-S."/>
            <person name="Soldo B."/>
            <person name="Sorokin A."/>
            <person name="Tacconi E."/>
            <person name="Takagi T."/>
            <person name="Takahashi H."/>
            <person name="Takemaru K."/>
            <person name="Takeuchi M."/>
            <person name="Tamakoshi A."/>
            <person name="Tanaka T."/>
            <person name="Terpstra P."/>
            <person name="Tognoni A."/>
            <person name="Tosato V."/>
            <person name="Uchiyama S."/>
            <person name="Vandenbol M."/>
            <person name="Vannier F."/>
            <person name="Vassarotti A."/>
            <person name="Viari A."/>
            <person name="Wambutt R."/>
            <person name="Wedler E."/>
            <person name="Wedler H."/>
            <person name="Weitzenegger T."/>
            <person name="Winters P."/>
            <person name="Wipat A."/>
            <person name="Yamamoto H."/>
            <person name="Yamane K."/>
            <person name="Yasumoto K."/>
            <person name="Yata K."/>
            <person name="Yoshida K."/>
            <person name="Yoshikawa H.-F."/>
            <person name="Zumstein E."/>
            <person name="Yoshikawa H."/>
            <person name="Danchin A."/>
        </authorList>
    </citation>
    <scope>NUCLEOTIDE SEQUENCE [LARGE SCALE GENOMIC DNA]</scope>
    <source>
        <strain>168</strain>
    </source>
</reference>
<reference key="4">
    <citation type="journal article" date="2009" name="Microbiology">
        <title>From a consortium sequence to a unified sequence: the Bacillus subtilis 168 reference genome a decade later.</title>
        <authorList>
            <person name="Barbe V."/>
            <person name="Cruveiller S."/>
            <person name="Kunst F."/>
            <person name="Lenoble P."/>
            <person name="Meurice G."/>
            <person name="Sekowska A."/>
            <person name="Vallenet D."/>
            <person name="Wang T."/>
            <person name="Moszer I."/>
            <person name="Medigue C."/>
            <person name="Danchin A."/>
        </authorList>
    </citation>
    <scope>SEQUENCE REVISION TO 219-220</scope>
</reference>
<reference key="5">
    <citation type="journal article" date="2004" name="Microbiology">
        <title>Characterization of the Bacillus subtilis YxdJ response regulator as the inducer of expression for the cognate ABC transporter YxdLM.</title>
        <authorList>
            <person name="Joseph P."/>
            <person name="Guiseppi A."/>
            <person name="Sorokin A."/>
            <person name="Denizot F."/>
        </authorList>
    </citation>
    <scope>INDUCTION</scope>
    <scope>POSSIBLE FUNCTION</scope>
    <source>
        <strain>168</strain>
    </source>
</reference>
<reference key="6">
    <citation type="journal article" date="2005" name="Microbiology">
        <title>Cationic antimicrobial peptides elicit a complex stress response in Bacillus subtilis that involves ECF-type sigma factors and two-component signal transduction systems.</title>
        <authorList>
            <person name="Pietiaeinen M."/>
            <person name="Gardemeister M."/>
            <person name="Mecklin M."/>
            <person name="Leskelae S."/>
            <person name="Sarvas M."/>
            <person name="Kontinen V.P."/>
        </authorList>
    </citation>
    <scope>INDUCTION BY LL-37</scope>
    <scope>POSSIBLE FUNCTION</scope>
    <source>
        <strain>168</strain>
    </source>
</reference>
<protein>
    <recommendedName>
        <fullName>ABC transporter ATP-binding protein YxdL</fullName>
    </recommendedName>
</protein>
<evidence type="ECO:0000255" key="1">
    <source>
        <dbReference type="PROSITE-ProRule" id="PRU00434"/>
    </source>
</evidence>
<evidence type="ECO:0000269" key="2">
    <source>
    </source>
</evidence>
<evidence type="ECO:0000269" key="3">
    <source>
    </source>
</evidence>
<evidence type="ECO:0000305" key="4"/>
<feature type="chain" id="PRO_0000093150" description="ABC transporter ATP-binding protein YxdL">
    <location>
        <begin position="1"/>
        <end position="257"/>
    </location>
</feature>
<feature type="domain" description="ABC transporter" evidence="1">
    <location>
        <begin position="5"/>
        <end position="243"/>
    </location>
</feature>
<feature type="binding site" evidence="1">
    <location>
        <begin position="40"/>
        <end position="47"/>
    </location>
    <ligand>
        <name>ATP</name>
        <dbReference type="ChEBI" id="CHEBI:30616"/>
    </ligand>
</feature>
<feature type="sequence conflict" description="In Ref. 1; BAA03302 and 2; BAA08315." evidence="4" ref="1 2">
    <original>GE</original>
    <variation>VV</variation>
    <location>
        <begin position="219"/>
        <end position="220"/>
    </location>
</feature>
<organism>
    <name type="scientific">Bacillus subtilis (strain 168)</name>
    <dbReference type="NCBI Taxonomy" id="224308"/>
    <lineage>
        <taxon>Bacteria</taxon>
        <taxon>Bacillati</taxon>
        <taxon>Bacillota</taxon>
        <taxon>Bacilli</taxon>
        <taxon>Bacillales</taxon>
        <taxon>Bacillaceae</taxon>
        <taxon>Bacillus</taxon>
    </lineage>
</organism>
<name>YXDL_BACSU</name>
<dbReference type="EMBL" id="D14399">
    <property type="protein sequence ID" value="BAA03302.1"/>
    <property type="molecule type" value="Genomic_DNA"/>
</dbReference>
<dbReference type="EMBL" id="D45912">
    <property type="protein sequence ID" value="BAA08315.1"/>
    <property type="molecule type" value="Genomic_DNA"/>
</dbReference>
<dbReference type="EMBL" id="AL009126">
    <property type="protein sequence ID" value="CAB16000.2"/>
    <property type="molecule type" value="Genomic_DNA"/>
</dbReference>
<dbReference type="PIR" id="A70074">
    <property type="entry name" value="A70074"/>
</dbReference>
<dbReference type="RefSeq" id="WP_003243557.1">
    <property type="nucleotide sequence ID" value="NZ_OZ025638.1"/>
</dbReference>
<dbReference type="SMR" id="P42423"/>
<dbReference type="FunCoup" id="P42423">
    <property type="interactions" value="301"/>
</dbReference>
<dbReference type="STRING" id="224308.BSU39640"/>
<dbReference type="TCDB" id="3.A.1.134.6">
    <property type="family name" value="the atp-binding cassette (abc) superfamily"/>
</dbReference>
<dbReference type="PaxDb" id="224308-BSU39640"/>
<dbReference type="EnsemblBacteria" id="CAB16000">
    <property type="protein sequence ID" value="CAB16000"/>
    <property type="gene ID" value="BSU_39640"/>
</dbReference>
<dbReference type="GeneID" id="937596"/>
<dbReference type="KEGG" id="bsu:BSU39640"/>
<dbReference type="PATRIC" id="fig|224308.179.peg.4289"/>
<dbReference type="eggNOG" id="COG1136">
    <property type="taxonomic scope" value="Bacteria"/>
</dbReference>
<dbReference type="InParanoid" id="P42423"/>
<dbReference type="OrthoDB" id="9791546at2"/>
<dbReference type="PhylomeDB" id="P42423"/>
<dbReference type="BioCyc" id="BSUB:BSU39640-MONOMER"/>
<dbReference type="Proteomes" id="UP000001570">
    <property type="component" value="Chromosome"/>
</dbReference>
<dbReference type="GO" id="GO:0005886">
    <property type="term" value="C:plasma membrane"/>
    <property type="evidence" value="ECO:0000318"/>
    <property type="project" value="GO_Central"/>
</dbReference>
<dbReference type="GO" id="GO:0005524">
    <property type="term" value="F:ATP binding"/>
    <property type="evidence" value="ECO:0007669"/>
    <property type="project" value="UniProtKB-KW"/>
</dbReference>
<dbReference type="GO" id="GO:0016887">
    <property type="term" value="F:ATP hydrolysis activity"/>
    <property type="evidence" value="ECO:0007669"/>
    <property type="project" value="InterPro"/>
</dbReference>
<dbReference type="GO" id="GO:0022857">
    <property type="term" value="F:transmembrane transporter activity"/>
    <property type="evidence" value="ECO:0000318"/>
    <property type="project" value="GO_Central"/>
</dbReference>
<dbReference type="GO" id="GO:0055085">
    <property type="term" value="P:transmembrane transport"/>
    <property type="evidence" value="ECO:0000318"/>
    <property type="project" value="GO_Central"/>
</dbReference>
<dbReference type="CDD" id="cd03255">
    <property type="entry name" value="ABC_MJ0796_LolCDE_FtsE"/>
    <property type="match status" value="1"/>
</dbReference>
<dbReference type="FunFam" id="3.40.50.300:FF:000032">
    <property type="entry name" value="Export ABC transporter ATP-binding protein"/>
    <property type="match status" value="1"/>
</dbReference>
<dbReference type="Gene3D" id="3.40.50.300">
    <property type="entry name" value="P-loop containing nucleotide triphosphate hydrolases"/>
    <property type="match status" value="1"/>
</dbReference>
<dbReference type="InterPro" id="IPR003593">
    <property type="entry name" value="AAA+_ATPase"/>
</dbReference>
<dbReference type="InterPro" id="IPR003439">
    <property type="entry name" value="ABC_transporter-like_ATP-bd"/>
</dbReference>
<dbReference type="InterPro" id="IPR017871">
    <property type="entry name" value="ABC_transporter-like_CS"/>
</dbReference>
<dbReference type="InterPro" id="IPR017911">
    <property type="entry name" value="MacB-like_ATP-bd"/>
</dbReference>
<dbReference type="InterPro" id="IPR027417">
    <property type="entry name" value="P-loop_NTPase"/>
</dbReference>
<dbReference type="PANTHER" id="PTHR42798:SF7">
    <property type="entry name" value="ALPHA-D-RIBOSE 1-METHYLPHOSPHONATE 5-TRIPHOSPHATE SYNTHASE SUBUNIT PHNL"/>
    <property type="match status" value="1"/>
</dbReference>
<dbReference type="PANTHER" id="PTHR42798">
    <property type="entry name" value="LIPOPROTEIN-RELEASING SYSTEM ATP-BINDING PROTEIN LOLD"/>
    <property type="match status" value="1"/>
</dbReference>
<dbReference type="Pfam" id="PF00005">
    <property type="entry name" value="ABC_tran"/>
    <property type="match status" value="1"/>
</dbReference>
<dbReference type="SMART" id="SM00382">
    <property type="entry name" value="AAA"/>
    <property type="match status" value="1"/>
</dbReference>
<dbReference type="SUPFAM" id="SSF52540">
    <property type="entry name" value="P-loop containing nucleoside triphosphate hydrolases"/>
    <property type="match status" value="1"/>
</dbReference>
<dbReference type="PROSITE" id="PS00211">
    <property type="entry name" value="ABC_TRANSPORTER_1"/>
    <property type="match status" value="1"/>
</dbReference>
<dbReference type="PROSITE" id="PS50893">
    <property type="entry name" value="ABC_TRANSPORTER_2"/>
    <property type="match status" value="1"/>
</dbReference>
<gene>
    <name type="primary">yxdL</name>
    <name type="ordered locus">BSU39640</name>
    <name type="ORF">B65F</name>
</gene>
<keyword id="KW-0067">ATP-binding</keyword>
<keyword id="KW-0547">Nucleotide-binding</keyword>
<keyword id="KW-1185">Reference proteome</keyword>
<keyword id="KW-0813">Transport</keyword>